<proteinExistence type="evidence at protein level"/>
<name>RBBP5_DROME</name>
<keyword id="KW-0156">Chromatin regulator</keyword>
<keyword id="KW-0539">Nucleus</keyword>
<keyword id="KW-1185">Reference proteome</keyword>
<keyword id="KW-0677">Repeat</keyword>
<keyword id="KW-0804">Transcription</keyword>
<keyword id="KW-0805">Transcription regulation</keyword>
<keyword id="KW-0853">WD repeat</keyword>
<dbReference type="EMBL" id="AE014296">
    <property type="protein sequence ID" value="AAF51573.2"/>
    <property type="molecule type" value="Genomic_DNA"/>
</dbReference>
<dbReference type="EMBL" id="AY071120">
    <property type="protein sequence ID" value="AAL48742.1"/>
    <property type="molecule type" value="mRNA"/>
</dbReference>
<dbReference type="EMBL" id="BT032759">
    <property type="protein sequence ID" value="ACD81773.1"/>
    <property type="molecule type" value="mRNA"/>
</dbReference>
<dbReference type="EMBL" id="BT032765">
    <property type="protein sequence ID" value="ACD81779.1"/>
    <property type="status" value="ALT_FRAME"/>
    <property type="molecule type" value="mRNA"/>
</dbReference>
<dbReference type="RefSeq" id="NP_649209.1">
    <property type="nucleotide sequence ID" value="NM_140952.3"/>
</dbReference>
<dbReference type="SMR" id="Q9VPH8"/>
<dbReference type="BioGRID" id="65500">
    <property type="interactions" value="5"/>
</dbReference>
<dbReference type="ComplexPortal" id="CPX-2284">
    <property type="entry name" value="Histone-lysine N-methyltransferase/demethylase TRR complex"/>
</dbReference>
<dbReference type="ComplexPortal" id="CPX-2287">
    <property type="entry name" value="Histone-lysine N-methyltransferase TRX complex"/>
</dbReference>
<dbReference type="ComplexPortal" id="CPX-2798">
    <property type="entry name" value="COMPASS complex"/>
</dbReference>
<dbReference type="FunCoup" id="Q9VPH8">
    <property type="interactions" value="2123"/>
</dbReference>
<dbReference type="IntAct" id="Q9VPH8">
    <property type="interactions" value="3"/>
</dbReference>
<dbReference type="MINT" id="Q9VPH8"/>
<dbReference type="STRING" id="7227.FBpp0077900"/>
<dbReference type="PaxDb" id="7227-FBpp0077900"/>
<dbReference type="DNASU" id="40239"/>
<dbReference type="EnsemblMetazoa" id="FBtr0078242">
    <property type="protein sequence ID" value="FBpp0077900"/>
    <property type="gene ID" value="FBgn0036973"/>
</dbReference>
<dbReference type="GeneID" id="40239"/>
<dbReference type="KEGG" id="dme:Dmel_CG5585"/>
<dbReference type="UCSC" id="CG5585-RA">
    <property type="organism name" value="d. melanogaster"/>
</dbReference>
<dbReference type="AGR" id="FB:FBgn0036973"/>
<dbReference type="CTD" id="5929"/>
<dbReference type="FlyBase" id="FBgn0036973">
    <property type="gene designation" value="Rbbp5"/>
</dbReference>
<dbReference type="VEuPathDB" id="VectorBase:FBgn0036973"/>
<dbReference type="eggNOG" id="KOG1273">
    <property type="taxonomic scope" value="Eukaryota"/>
</dbReference>
<dbReference type="GeneTree" id="ENSGT00530000064100"/>
<dbReference type="HOGENOM" id="CLU_032142_2_2_1"/>
<dbReference type="InParanoid" id="Q9VPH8"/>
<dbReference type="OMA" id="DYEDDIM"/>
<dbReference type="OrthoDB" id="196858at2759"/>
<dbReference type="PhylomeDB" id="Q9VPH8"/>
<dbReference type="Reactome" id="R-DME-201722">
    <property type="pathway name" value="Formation of the beta-catenin:TCF transactivating complex"/>
</dbReference>
<dbReference type="Reactome" id="R-DME-8936459">
    <property type="pathway name" value="RUNX1 regulates genes involved in megakaryocyte differentiation and platelet function"/>
</dbReference>
<dbReference type="Reactome" id="R-DME-8951664">
    <property type="pathway name" value="Neddylation"/>
</dbReference>
<dbReference type="Reactome" id="R-DME-9772755">
    <property type="pathway name" value="Formation of WDR5-containing histone-modifying complexes"/>
</dbReference>
<dbReference type="BioGRID-ORCS" id="40239">
    <property type="hits" value="1 hit in 1 CRISPR screen"/>
</dbReference>
<dbReference type="GenomeRNAi" id="40239"/>
<dbReference type="PRO" id="PR:Q9VPH8"/>
<dbReference type="Proteomes" id="UP000000803">
    <property type="component" value="Chromosome 3L"/>
</dbReference>
<dbReference type="Bgee" id="FBgn0036973">
    <property type="expression patterns" value="Expressed in eye disc (Drosophila) and 65 other cell types or tissues"/>
</dbReference>
<dbReference type="GO" id="GO:0044665">
    <property type="term" value="C:MLL1/2 complex"/>
    <property type="evidence" value="ECO:0000250"/>
    <property type="project" value="FlyBase"/>
</dbReference>
<dbReference type="GO" id="GO:0044666">
    <property type="term" value="C:MLL3/4 complex"/>
    <property type="evidence" value="ECO:0000314"/>
    <property type="project" value="FlyBase"/>
</dbReference>
<dbReference type="GO" id="GO:0048188">
    <property type="term" value="C:Set1C/COMPASS complex"/>
    <property type="evidence" value="ECO:0000314"/>
    <property type="project" value="FlyBase"/>
</dbReference>
<dbReference type="GO" id="GO:0006325">
    <property type="term" value="P:chromatin organization"/>
    <property type="evidence" value="ECO:0007669"/>
    <property type="project" value="UniProtKB-KW"/>
</dbReference>
<dbReference type="GO" id="GO:0007507">
    <property type="term" value="P:heart development"/>
    <property type="evidence" value="ECO:0000315"/>
    <property type="project" value="FlyBase"/>
</dbReference>
<dbReference type="FunFam" id="2.130.10.10:FF:000066">
    <property type="entry name" value="retinoblastoma-binding protein 5 isoform X2"/>
    <property type="match status" value="1"/>
</dbReference>
<dbReference type="Gene3D" id="2.130.10.10">
    <property type="entry name" value="YVTN repeat-like/Quinoprotein amine dehydrogenase"/>
    <property type="match status" value="1"/>
</dbReference>
<dbReference type="InterPro" id="IPR037850">
    <property type="entry name" value="RBBP5/Swd1"/>
</dbReference>
<dbReference type="InterPro" id="IPR015943">
    <property type="entry name" value="WD40/YVTN_repeat-like_dom_sf"/>
</dbReference>
<dbReference type="InterPro" id="IPR019775">
    <property type="entry name" value="WD40_repeat_CS"/>
</dbReference>
<dbReference type="InterPro" id="IPR001680">
    <property type="entry name" value="WD40_rpt"/>
</dbReference>
<dbReference type="PANTHER" id="PTHR44040">
    <property type="entry name" value="RETINOBLASTOMA-BINDING PROTEIN 5"/>
    <property type="match status" value="1"/>
</dbReference>
<dbReference type="PANTHER" id="PTHR44040:SF1">
    <property type="entry name" value="RETINOBLASTOMA-BINDING PROTEIN 5"/>
    <property type="match status" value="1"/>
</dbReference>
<dbReference type="Pfam" id="PF00400">
    <property type="entry name" value="WD40"/>
    <property type="match status" value="2"/>
</dbReference>
<dbReference type="SMART" id="SM00320">
    <property type="entry name" value="WD40"/>
    <property type="match status" value="5"/>
</dbReference>
<dbReference type="SUPFAM" id="SSF117289">
    <property type="entry name" value="Nucleoporin domain"/>
    <property type="match status" value="1"/>
</dbReference>
<dbReference type="PROSITE" id="PS00678">
    <property type="entry name" value="WD_REPEATS_1"/>
    <property type="match status" value="1"/>
</dbReference>
<dbReference type="PROSITE" id="PS50082">
    <property type="entry name" value="WD_REPEATS_2"/>
    <property type="match status" value="1"/>
</dbReference>
<dbReference type="PROSITE" id="PS50294">
    <property type="entry name" value="WD_REPEATS_REGION"/>
    <property type="match status" value="1"/>
</dbReference>
<protein>
    <recommendedName>
        <fullName evidence="1">Retinoblastoma-binding protein 5 homolog</fullName>
    </recommendedName>
</protein>
<organism>
    <name type="scientific">Drosophila melanogaster</name>
    <name type="common">Fruit fly</name>
    <dbReference type="NCBI Taxonomy" id="7227"/>
    <lineage>
        <taxon>Eukaryota</taxon>
        <taxon>Metazoa</taxon>
        <taxon>Ecdysozoa</taxon>
        <taxon>Arthropoda</taxon>
        <taxon>Hexapoda</taxon>
        <taxon>Insecta</taxon>
        <taxon>Pterygota</taxon>
        <taxon>Neoptera</taxon>
        <taxon>Endopterygota</taxon>
        <taxon>Diptera</taxon>
        <taxon>Brachycera</taxon>
        <taxon>Muscomorpha</taxon>
        <taxon>Ephydroidea</taxon>
        <taxon>Drosophilidae</taxon>
        <taxon>Drosophila</taxon>
        <taxon>Sophophora</taxon>
    </lineage>
</organism>
<evidence type="ECO:0000250" key="1">
    <source>
        <dbReference type="UniProtKB" id="Q15291"/>
    </source>
</evidence>
<evidence type="ECO:0000255" key="2"/>
<evidence type="ECO:0000256" key="3">
    <source>
        <dbReference type="SAM" id="MobiDB-lite"/>
    </source>
</evidence>
<evidence type="ECO:0000269" key="4">
    <source>
    </source>
</evidence>
<evidence type="ECO:0000269" key="5">
    <source>
    </source>
</evidence>
<evidence type="ECO:0000269" key="6">
    <source>
    </source>
</evidence>
<evidence type="ECO:0000305" key="7"/>
<evidence type="ECO:0000312" key="8">
    <source>
        <dbReference type="EMBL" id="AAF51573.2"/>
    </source>
</evidence>
<evidence type="ECO:0000312" key="9">
    <source>
        <dbReference type="EMBL" id="AAL48742.1"/>
    </source>
</evidence>
<evidence type="ECO:0000312" key="10">
    <source>
        <dbReference type="EMBL" id="ACD81773.1"/>
    </source>
</evidence>
<evidence type="ECO:0000312" key="11">
    <source>
        <dbReference type="FlyBase" id="FBgn0036973"/>
    </source>
</evidence>
<feature type="chain" id="PRO_0000429381" description="Retinoblastoma-binding protein 5 homolog">
    <location>
        <begin position="1"/>
        <end position="489"/>
    </location>
</feature>
<feature type="repeat" description="WD 1" evidence="2">
    <location>
        <begin position="22"/>
        <end position="63"/>
    </location>
</feature>
<feature type="repeat" description="WD 2" evidence="2">
    <location>
        <begin position="64"/>
        <end position="103"/>
    </location>
</feature>
<feature type="repeat" description="WD 3" evidence="2">
    <location>
        <begin position="147"/>
        <end position="187"/>
    </location>
</feature>
<feature type="repeat" description="WD 4" evidence="2">
    <location>
        <begin position="195"/>
        <end position="234"/>
    </location>
</feature>
<feature type="repeat" description="WD 5" evidence="2">
    <location>
        <begin position="248"/>
        <end position="290"/>
    </location>
</feature>
<feature type="repeat" description="WD 6" evidence="2">
    <location>
        <begin position="292"/>
        <end position="330"/>
    </location>
</feature>
<feature type="region of interest" description="Disordered" evidence="3">
    <location>
        <begin position="451"/>
        <end position="489"/>
    </location>
</feature>
<sequence>MNLELLESFGQNYPEEFDGSLDCISLAVTCAFNKYGTLLAVGCNDGRIVIWDFLTRGIAKIISAHVHPVCSLSWTRNGHKLLSASTDNNVCIWDVLTGELEHKYRFPSPVLKVQFDPRNDNRLLVCPMRYAAVLVEVGGTHRCLPLDSDGDLNIVASFDRRGKHIYTGNAKGKILVLDVETFEVVASFRIIVGTSSATAVKSIEFARRGDAFLINTSDRVIRVYDSKEIITLGKDGEPEPIQKLQDLVNKTTWKKCCFSGDGEYICAGSARQHALYIWEKSIGNLVKILHGTKGELLLDVVWHPVRPIIASISSGLVSIWAQNQVENWSAFAPDFKELDENVEYEERESEFDIADEDKSVDLNADAQQDEEIEVDVQKVEPVAAFCSSDEEGEDENALQFLPMAPEVEDPEDGWTGQDGLEPSAVMLGHMEPHDYEDDIMASKRRRMQLYDVSLPDAPTDETHPLISSKASKDKQQPVGGKKAAGRTKK</sequence>
<accession>Q9VPH8</accession>
<accession>B3DMX7</accession>
<comment type="function">
    <text evidence="5 6">Component of the SET1 complex that specifically di- and trimethylates 'Lys-4' of histone H3 and of the MLL3/4 complex which also methylates histone H3 'Lys-4'.</text>
</comment>
<comment type="subunit">
    <text evidence="5 6">Core component of several methyltransferase-containing complexes. Component of the SET1 complex, composed at least of the catalytic subunit Set1, wds/WDR5, Wdr82, Rbbp5, ash2, Cfp1/CXXC1, hcf and Dpy-30L1. Component of the MLL3/4 complex composed at least of the catalytic subunit trr, ash2, Rbbp5, Dpy-30L1, wds, hcf, ptip, Pa1, Utx, Lpt and Ncoa6.</text>
</comment>
<comment type="interaction">
    <interactant intactId="EBI-163110">
        <id>Q9VPH8</id>
    </interactant>
    <interactant intactId="EBI-6991562">
        <id>Q94545</id>
        <label>ash2</label>
    </interactant>
    <organismsDiffer>false</organismsDiffer>
    <experiments>4</experiments>
</comment>
<comment type="subcellular location">
    <subcellularLocation>
        <location evidence="5">Nucleus</location>
    </subcellularLocation>
</comment>
<comment type="sequence caution" evidence="7">
    <conflict type="frameshift">
        <sequence resource="EMBL-CDS" id="ACD81779"/>
    </conflict>
</comment>
<reference evidence="8" key="1">
    <citation type="journal article" date="2000" name="Science">
        <title>The genome sequence of Drosophila melanogaster.</title>
        <authorList>
            <person name="Adams M.D."/>
            <person name="Celniker S.E."/>
            <person name="Holt R.A."/>
            <person name="Evans C.A."/>
            <person name="Gocayne J.D."/>
            <person name="Amanatides P.G."/>
            <person name="Scherer S.E."/>
            <person name="Li P.W."/>
            <person name="Hoskins R.A."/>
            <person name="Galle R.F."/>
            <person name="George R.A."/>
            <person name="Lewis S.E."/>
            <person name="Richards S."/>
            <person name="Ashburner M."/>
            <person name="Henderson S.N."/>
            <person name="Sutton G.G."/>
            <person name="Wortman J.R."/>
            <person name="Yandell M.D."/>
            <person name="Zhang Q."/>
            <person name="Chen L.X."/>
            <person name="Brandon R.C."/>
            <person name="Rogers Y.-H.C."/>
            <person name="Blazej R.G."/>
            <person name="Champe M."/>
            <person name="Pfeiffer B.D."/>
            <person name="Wan K.H."/>
            <person name="Doyle C."/>
            <person name="Baxter E.G."/>
            <person name="Helt G."/>
            <person name="Nelson C.R."/>
            <person name="Miklos G.L.G."/>
            <person name="Abril J.F."/>
            <person name="Agbayani A."/>
            <person name="An H.-J."/>
            <person name="Andrews-Pfannkoch C."/>
            <person name="Baldwin D."/>
            <person name="Ballew R.M."/>
            <person name="Basu A."/>
            <person name="Baxendale J."/>
            <person name="Bayraktaroglu L."/>
            <person name="Beasley E.M."/>
            <person name="Beeson K.Y."/>
            <person name="Benos P.V."/>
            <person name="Berman B.P."/>
            <person name="Bhandari D."/>
            <person name="Bolshakov S."/>
            <person name="Borkova D."/>
            <person name="Botchan M.R."/>
            <person name="Bouck J."/>
            <person name="Brokstein P."/>
            <person name="Brottier P."/>
            <person name="Burtis K.C."/>
            <person name="Busam D.A."/>
            <person name="Butler H."/>
            <person name="Cadieu E."/>
            <person name="Center A."/>
            <person name="Chandra I."/>
            <person name="Cherry J.M."/>
            <person name="Cawley S."/>
            <person name="Dahlke C."/>
            <person name="Davenport L.B."/>
            <person name="Davies P."/>
            <person name="de Pablos B."/>
            <person name="Delcher A."/>
            <person name="Deng Z."/>
            <person name="Mays A.D."/>
            <person name="Dew I."/>
            <person name="Dietz S.M."/>
            <person name="Dodson K."/>
            <person name="Doup L.E."/>
            <person name="Downes M."/>
            <person name="Dugan-Rocha S."/>
            <person name="Dunkov B.C."/>
            <person name="Dunn P."/>
            <person name="Durbin K.J."/>
            <person name="Evangelista C.C."/>
            <person name="Ferraz C."/>
            <person name="Ferriera S."/>
            <person name="Fleischmann W."/>
            <person name="Fosler C."/>
            <person name="Gabrielian A.E."/>
            <person name="Garg N.S."/>
            <person name="Gelbart W.M."/>
            <person name="Glasser K."/>
            <person name="Glodek A."/>
            <person name="Gong F."/>
            <person name="Gorrell J.H."/>
            <person name="Gu Z."/>
            <person name="Guan P."/>
            <person name="Harris M."/>
            <person name="Harris N.L."/>
            <person name="Harvey D.A."/>
            <person name="Heiman T.J."/>
            <person name="Hernandez J.R."/>
            <person name="Houck J."/>
            <person name="Hostin D."/>
            <person name="Houston K.A."/>
            <person name="Howland T.J."/>
            <person name="Wei M.-H."/>
            <person name="Ibegwam C."/>
            <person name="Jalali M."/>
            <person name="Kalush F."/>
            <person name="Karpen G.H."/>
            <person name="Ke Z."/>
            <person name="Kennison J.A."/>
            <person name="Ketchum K.A."/>
            <person name="Kimmel B.E."/>
            <person name="Kodira C.D."/>
            <person name="Kraft C.L."/>
            <person name="Kravitz S."/>
            <person name="Kulp D."/>
            <person name="Lai Z."/>
            <person name="Lasko P."/>
            <person name="Lei Y."/>
            <person name="Levitsky A.A."/>
            <person name="Li J.H."/>
            <person name="Li Z."/>
            <person name="Liang Y."/>
            <person name="Lin X."/>
            <person name="Liu X."/>
            <person name="Mattei B."/>
            <person name="McIntosh T.C."/>
            <person name="McLeod M.P."/>
            <person name="McPherson D."/>
            <person name="Merkulov G."/>
            <person name="Milshina N.V."/>
            <person name="Mobarry C."/>
            <person name="Morris J."/>
            <person name="Moshrefi A."/>
            <person name="Mount S.M."/>
            <person name="Moy M."/>
            <person name="Murphy B."/>
            <person name="Murphy L."/>
            <person name="Muzny D.M."/>
            <person name="Nelson D.L."/>
            <person name="Nelson D.R."/>
            <person name="Nelson K.A."/>
            <person name="Nixon K."/>
            <person name="Nusskern D.R."/>
            <person name="Pacleb J.M."/>
            <person name="Palazzolo M."/>
            <person name="Pittman G.S."/>
            <person name="Pan S."/>
            <person name="Pollard J."/>
            <person name="Puri V."/>
            <person name="Reese M.G."/>
            <person name="Reinert K."/>
            <person name="Remington K."/>
            <person name="Saunders R.D.C."/>
            <person name="Scheeler F."/>
            <person name="Shen H."/>
            <person name="Shue B.C."/>
            <person name="Siden-Kiamos I."/>
            <person name="Simpson M."/>
            <person name="Skupski M.P."/>
            <person name="Smith T.J."/>
            <person name="Spier E."/>
            <person name="Spradling A.C."/>
            <person name="Stapleton M."/>
            <person name="Strong R."/>
            <person name="Sun E."/>
            <person name="Svirskas R."/>
            <person name="Tector C."/>
            <person name="Turner R."/>
            <person name="Venter E."/>
            <person name="Wang A.H."/>
            <person name="Wang X."/>
            <person name="Wang Z.-Y."/>
            <person name="Wassarman D.A."/>
            <person name="Weinstock G.M."/>
            <person name="Weissenbach J."/>
            <person name="Williams S.M."/>
            <person name="Woodage T."/>
            <person name="Worley K.C."/>
            <person name="Wu D."/>
            <person name="Yang S."/>
            <person name="Yao Q.A."/>
            <person name="Ye J."/>
            <person name="Yeh R.-F."/>
            <person name="Zaveri J.S."/>
            <person name="Zhan M."/>
            <person name="Zhang G."/>
            <person name="Zhao Q."/>
            <person name="Zheng L."/>
            <person name="Zheng X.H."/>
            <person name="Zhong F.N."/>
            <person name="Zhong W."/>
            <person name="Zhou X."/>
            <person name="Zhu S.C."/>
            <person name="Zhu X."/>
            <person name="Smith H.O."/>
            <person name="Gibbs R.A."/>
            <person name="Myers E.W."/>
            <person name="Rubin G.M."/>
            <person name="Venter J.C."/>
        </authorList>
    </citation>
    <scope>NUCLEOTIDE SEQUENCE [LARGE SCALE GENOMIC DNA]</scope>
    <source>
        <strain>Berkeley</strain>
    </source>
</reference>
<reference evidence="8" key="2">
    <citation type="journal article" date="2002" name="Genome Biol.">
        <title>Annotation of the Drosophila melanogaster euchromatic genome: a systematic review.</title>
        <authorList>
            <person name="Misra S."/>
            <person name="Crosby M.A."/>
            <person name="Mungall C.J."/>
            <person name="Matthews B.B."/>
            <person name="Campbell K.S."/>
            <person name="Hradecky P."/>
            <person name="Huang Y."/>
            <person name="Kaminker J.S."/>
            <person name="Millburn G.H."/>
            <person name="Prochnik S.E."/>
            <person name="Smith C.D."/>
            <person name="Tupy J.L."/>
            <person name="Whitfield E.J."/>
            <person name="Bayraktaroglu L."/>
            <person name="Berman B.P."/>
            <person name="Bettencourt B.R."/>
            <person name="Celniker S.E."/>
            <person name="de Grey A.D.N.J."/>
            <person name="Drysdale R.A."/>
            <person name="Harris N.L."/>
            <person name="Richter J."/>
            <person name="Russo S."/>
            <person name="Schroeder A.J."/>
            <person name="Shu S.Q."/>
            <person name="Stapleton M."/>
            <person name="Yamada C."/>
            <person name="Ashburner M."/>
            <person name="Gelbart W.M."/>
            <person name="Rubin G.M."/>
            <person name="Lewis S.E."/>
        </authorList>
    </citation>
    <scope>GENOME REANNOTATION</scope>
    <source>
        <strain>Berkeley</strain>
    </source>
</reference>
<reference evidence="9" key="3">
    <citation type="journal article" date="2002" name="Genome Biol.">
        <title>A Drosophila full-length cDNA resource.</title>
        <authorList>
            <person name="Stapleton M."/>
            <person name="Carlson J.W."/>
            <person name="Brokstein P."/>
            <person name="Yu C."/>
            <person name="Champe M."/>
            <person name="George R.A."/>
            <person name="Guarin H."/>
            <person name="Kronmiller B."/>
            <person name="Pacleb J.M."/>
            <person name="Park S."/>
            <person name="Wan K.H."/>
            <person name="Rubin G.M."/>
            <person name="Celniker S.E."/>
        </authorList>
    </citation>
    <scope>NUCLEOTIDE SEQUENCE [LARGE SCALE MRNA]</scope>
    <source>
        <strain evidence="4">Berkeley</strain>
        <tissue evidence="4">Embryo</tissue>
    </source>
</reference>
<reference evidence="10" key="4">
    <citation type="submission" date="2008-05" db="EMBL/GenBank/DDBJ databases">
        <authorList>
            <person name="Carlson J."/>
            <person name="Booth B."/>
            <person name="Frise E."/>
            <person name="Park S."/>
            <person name="Wan K."/>
            <person name="Yu C."/>
            <person name="Celniker S."/>
        </authorList>
    </citation>
    <scope>NUCLEOTIDE SEQUENCE [LARGE SCALE MRNA]</scope>
    <source>
        <strain>Berkeley</strain>
    </source>
</reference>
<reference evidence="7" key="5">
    <citation type="journal article" date="2011" name="EMBO J.">
        <title>Drosophila Set1 is the major histone H3 lysine 4 trimethyltransferase with role in transcription.</title>
        <authorList>
            <person name="Ardehali M.B."/>
            <person name="Mei A."/>
            <person name="Zobeck K.L."/>
            <person name="Caron M."/>
            <person name="Lis J.T."/>
            <person name="Kusch T."/>
        </authorList>
    </citation>
    <scope>FUNCTION</scope>
    <scope>IDENTIFICATION IN THE SET1 COMPLEX</scope>
    <scope>SUBCELLULAR LOCATION</scope>
</reference>
<reference evidence="7" key="6">
    <citation type="journal article" date="2011" name="Mol. Cell. Biol.">
        <title>The COMPASS family of H3K4 methylases in Drosophila.</title>
        <authorList>
            <person name="Mohan M."/>
            <person name="Herz H.M."/>
            <person name="Smith E.R."/>
            <person name="Zhang Y."/>
            <person name="Jackson J."/>
            <person name="Washburn M.P."/>
            <person name="Florens L."/>
            <person name="Eissenberg J.C."/>
            <person name="Shilatifard A."/>
        </authorList>
    </citation>
    <scope>FUNCTION</scope>
    <scope>IDENTIFICATION IN THE SET1 AND MLL3/4 COMPLEXES</scope>
</reference>
<gene>
    <name evidence="8 11" type="primary">Rbbp5</name>
    <name type="ORF">CG5585</name>
</gene>